<evidence type="ECO:0000255" key="1">
    <source>
        <dbReference type="HAMAP-Rule" id="MF_00420"/>
    </source>
</evidence>
<feature type="chain" id="PRO_1000080554" description="Phosphoribosylformylglycinamidine synthase subunit PurL">
    <location>
        <begin position="1"/>
        <end position="767"/>
    </location>
</feature>
<feature type="active site" evidence="1">
    <location>
        <position position="65"/>
    </location>
</feature>
<feature type="active site" description="Proton acceptor" evidence="1">
    <location>
        <position position="116"/>
    </location>
</feature>
<feature type="binding site" evidence="1">
    <location>
        <position position="68"/>
    </location>
    <ligand>
        <name>ATP</name>
        <dbReference type="ChEBI" id="CHEBI:30616"/>
    </ligand>
</feature>
<feature type="binding site" evidence="1">
    <location>
        <position position="112"/>
    </location>
    <ligand>
        <name>ATP</name>
        <dbReference type="ChEBI" id="CHEBI:30616"/>
    </ligand>
</feature>
<feature type="binding site" evidence="1">
    <location>
        <position position="114"/>
    </location>
    <ligand>
        <name>Mg(2+)</name>
        <dbReference type="ChEBI" id="CHEBI:18420"/>
        <label>1</label>
    </ligand>
</feature>
<feature type="binding site" evidence="1">
    <location>
        <begin position="115"/>
        <end position="118"/>
    </location>
    <ligand>
        <name>substrate</name>
    </ligand>
</feature>
<feature type="binding site" evidence="1">
    <location>
        <position position="137"/>
    </location>
    <ligand>
        <name>substrate</name>
    </ligand>
</feature>
<feature type="binding site" evidence="1">
    <location>
        <position position="138"/>
    </location>
    <ligand>
        <name>Mg(2+)</name>
        <dbReference type="ChEBI" id="CHEBI:18420"/>
        <label>2</label>
    </ligand>
</feature>
<feature type="binding site" evidence="1">
    <location>
        <position position="262"/>
    </location>
    <ligand>
        <name>substrate</name>
    </ligand>
</feature>
<feature type="binding site" evidence="1">
    <location>
        <position position="290"/>
    </location>
    <ligand>
        <name>Mg(2+)</name>
        <dbReference type="ChEBI" id="CHEBI:18420"/>
        <label>2</label>
    </ligand>
</feature>
<feature type="binding site" evidence="1">
    <location>
        <begin position="334"/>
        <end position="336"/>
    </location>
    <ligand>
        <name>substrate</name>
    </ligand>
</feature>
<feature type="binding site" evidence="1">
    <location>
        <position position="522"/>
    </location>
    <ligand>
        <name>ATP</name>
        <dbReference type="ChEBI" id="CHEBI:30616"/>
    </ligand>
</feature>
<feature type="binding site" evidence="1">
    <location>
        <position position="559"/>
    </location>
    <ligand>
        <name>ATP</name>
        <dbReference type="ChEBI" id="CHEBI:30616"/>
    </ligand>
</feature>
<feature type="binding site" evidence="1">
    <location>
        <position position="560"/>
    </location>
    <ligand>
        <name>Mg(2+)</name>
        <dbReference type="ChEBI" id="CHEBI:18420"/>
        <label>1</label>
    </ligand>
</feature>
<feature type="binding site" evidence="1">
    <location>
        <position position="562"/>
    </location>
    <ligand>
        <name>substrate</name>
    </ligand>
</feature>
<accession>A9WV65</accession>
<protein>
    <recommendedName>
        <fullName evidence="1">Phosphoribosylformylglycinamidine synthase subunit PurL</fullName>
        <shortName evidence="1">FGAM synthase</shortName>
        <ecNumber evidence="1">6.3.5.3</ecNumber>
    </recommendedName>
    <alternativeName>
        <fullName evidence="1">Formylglycinamide ribonucleotide amidotransferase subunit II</fullName>
        <shortName evidence="1">FGAR amidotransferase II</shortName>
        <shortName evidence="1">FGAR-AT II</shortName>
    </alternativeName>
    <alternativeName>
        <fullName evidence="1">Glutamine amidotransferase PurL</fullName>
    </alternativeName>
    <alternativeName>
        <fullName evidence="1">Phosphoribosylformylglycinamidine synthase subunit II</fullName>
    </alternativeName>
</protein>
<organism>
    <name type="scientific">Renibacterium salmoninarum (strain ATCC 33209 / DSM 20767 / JCM 11484 / NBRC 15589 / NCIMB 2235)</name>
    <dbReference type="NCBI Taxonomy" id="288705"/>
    <lineage>
        <taxon>Bacteria</taxon>
        <taxon>Bacillati</taxon>
        <taxon>Actinomycetota</taxon>
        <taxon>Actinomycetes</taxon>
        <taxon>Micrococcales</taxon>
        <taxon>Micrococcaceae</taxon>
        <taxon>Renibacterium</taxon>
    </lineage>
</organism>
<reference key="1">
    <citation type="journal article" date="2008" name="J. Bacteriol.">
        <title>Genome sequence of the fish pathogen Renibacterium salmoninarum suggests reductive evolution away from an environmental Arthrobacter ancestor.</title>
        <authorList>
            <person name="Wiens G.D."/>
            <person name="Rockey D.D."/>
            <person name="Wu Z."/>
            <person name="Chang J."/>
            <person name="Levy R."/>
            <person name="Crane S."/>
            <person name="Chen D.S."/>
            <person name="Capri G.R."/>
            <person name="Burnett J.R."/>
            <person name="Sudheesh P.S."/>
            <person name="Schipma M.J."/>
            <person name="Burd H."/>
            <person name="Bhattacharyya A."/>
            <person name="Rhodes L.D."/>
            <person name="Kaul R."/>
            <person name="Strom M.S."/>
        </authorList>
    </citation>
    <scope>NUCLEOTIDE SEQUENCE [LARGE SCALE GENOMIC DNA]</scope>
    <source>
        <strain>ATCC 33209 / DSM 20767 / JCM 11484 / NBRC 15589 / NCIMB 2235</strain>
    </source>
</reference>
<proteinExistence type="inferred from homology"/>
<comment type="function">
    <text evidence="1">Part of the phosphoribosylformylglycinamidine synthase complex involved in the purines biosynthetic pathway. Catalyzes the ATP-dependent conversion of formylglycinamide ribonucleotide (FGAR) and glutamine to yield formylglycinamidine ribonucleotide (FGAM) and glutamate. The FGAM synthase complex is composed of three subunits. PurQ produces an ammonia molecule by converting glutamine to glutamate. PurL transfers the ammonia molecule to FGAR to form FGAM in an ATP-dependent manner. PurS interacts with PurQ and PurL and is thought to assist in the transfer of the ammonia molecule from PurQ to PurL.</text>
</comment>
<comment type="catalytic activity">
    <reaction evidence="1">
        <text>N(2)-formyl-N(1)-(5-phospho-beta-D-ribosyl)glycinamide + L-glutamine + ATP + H2O = 2-formamido-N(1)-(5-O-phospho-beta-D-ribosyl)acetamidine + L-glutamate + ADP + phosphate + H(+)</text>
        <dbReference type="Rhea" id="RHEA:17129"/>
        <dbReference type="ChEBI" id="CHEBI:15377"/>
        <dbReference type="ChEBI" id="CHEBI:15378"/>
        <dbReference type="ChEBI" id="CHEBI:29985"/>
        <dbReference type="ChEBI" id="CHEBI:30616"/>
        <dbReference type="ChEBI" id="CHEBI:43474"/>
        <dbReference type="ChEBI" id="CHEBI:58359"/>
        <dbReference type="ChEBI" id="CHEBI:147286"/>
        <dbReference type="ChEBI" id="CHEBI:147287"/>
        <dbReference type="ChEBI" id="CHEBI:456216"/>
        <dbReference type="EC" id="6.3.5.3"/>
    </reaction>
</comment>
<comment type="pathway">
    <text evidence="1">Purine metabolism; IMP biosynthesis via de novo pathway; 5-amino-1-(5-phospho-D-ribosyl)imidazole from N(2)-formyl-N(1)-(5-phospho-D-ribosyl)glycinamide: step 1/2.</text>
</comment>
<comment type="subunit">
    <text evidence="1">Monomer. Part of the FGAM synthase complex composed of 1 PurL, 1 PurQ and 2 PurS subunits.</text>
</comment>
<comment type="subcellular location">
    <subcellularLocation>
        <location evidence="1">Cytoplasm</location>
    </subcellularLocation>
</comment>
<comment type="similarity">
    <text evidence="1">Belongs to the FGAMS family.</text>
</comment>
<name>PURL_RENSM</name>
<keyword id="KW-0067">ATP-binding</keyword>
<keyword id="KW-0963">Cytoplasm</keyword>
<keyword id="KW-0436">Ligase</keyword>
<keyword id="KW-0460">Magnesium</keyword>
<keyword id="KW-0479">Metal-binding</keyword>
<keyword id="KW-0547">Nucleotide-binding</keyword>
<keyword id="KW-0658">Purine biosynthesis</keyword>
<keyword id="KW-1185">Reference proteome</keyword>
<gene>
    <name evidence="1" type="primary">purL</name>
    <name type="ordered locus">RSal33209_3376</name>
</gene>
<sequence>MTTSPSEKTSFNIDTVANAATTPETELPWAELGLKDNEFARINEILGRRPTAAELAMYSVMWSEHCSYKSSKVHLSQFGEKVTEEMKKHLLVGIGENAGVVDIGDGWAVTFKVESHNHPSFVEPYQGAATGIGGIVRDIISMGARPVAVMDPLRFGAIDHPDTARLVHGIVSGIGGYGNSLGLPNIGGEVVFDSVYQGNPLVNALAVGVLRHEDIRLANASGVGNRVVLFGARTGGDGIGGASVLASESFDSTKPSKRPAVQVGDPFAEKVLIECCLELFKASIVDGIQDLGAAGISCATSELASNGEGGMHVELTSVLLRDPTLTPGEILMSESQERMMAVVTPENVAAFEAVMAKWDVEYSWLGEVTDTGRLIIDWDGETIVDVDPRTVAHDGPVYNRPFHRPEWLDALQADSFLASGVAEVPADLGAAVVELMSSPNMASKSWVTDQYDRYVQGNTAQAMPDDAGVIRVDETTGLGVALSTDANGRYCYLNPREGAKLALAEAYRNVATSGARPLAVTDCLNFGSPEDPEVMWQFAESVTGLADACQELGVPVTGGNVSLYNQTGGVAIHPTPVVGVLGVFDDVARSTPSGWRVDGQAIYLLGTTRAELDGSEWANLRGHLGGQPPVVDLGREKELAEILINASRDGMVDAAHDLSEGGLAAALVESSLRFGVGARIGLDELAVRDGISIFEALFSESQARALVSVPRSEEVRFNDMCTARGFEHLRLGVVDAESGALDVQGAFTLSLDELREAHEATLPKYFG</sequence>
<dbReference type="EC" id="6.3.5.3" evidence="1"/>
<dbReference type="EMBL" id="CP000910">
    <property type="protein sequence ID" value="ABY25086.1"/>
    <property type="molecule type" value="Genomic_DNA"/>
</dbReference>
<dbReference type="RefSeq" id="WP_012246723.1">
    <property type="nucleotide sequence ID" value="NC_010168.1"/>
</dbReference>
<dbReference type="SMR" id="A9WV65"/>
<dbReference type="STRING" id="288705.RSal33209_3376"/>
<dbReference type="KEGG" id="rsa:RSal33209_3376"/>
<dbReference type="eggNOG" id="COG0046">
    <property type="taxonomic scope" value="Bacteria"/>
</dbReference>
<dbReference type="HOGENOM" id="CLU_003100_0_1_11"/>
<dbReference type="UniPathway" id="UPA00074">
    <property type="reaction ID" value="UER00128"/>
</dbReference>
<dbReference type="Proteomes" id="UP000002007">
    <property type="component" value="Chromosome"/>
</dbReference>
<dbReference type="GO" id="GO:0005737">
    <property type="term" value="C:cytoplasm"/>
    <property type="evidence" value="ECO:0007669"/>
    <property type="project" value="UniProtKB-SubCell"/>
</dbReference>
<dbReference type="GO" id="GO:0005524">
    <property type="term" value="F:ATP binding"/>
    <property type="evidence" value="ECO:0007669"/>
    <property type="project" value="UniProtKB-UniRule"/>
</dbReference>
<dbReference type="GO" id="GO:0000287">
    <property type="term" value="F:magnesium ion binding"/>
    <property type="evidence" value="ECO:0007669"/>
    <property type="project" value="UniProtKB-UniRule"/>
</dbReference>
<dbReference type="GO" id="GO:0004642">
    <property type="term" value="F:phosphoribosylformylglycinamidine synthase activity"/>
    <property type="evidence" value="ECO:0007669"/>
    <property type="project" value="UniProtKB-UniRule"/>
</dbReference>
<dbReference type="GO" id="GO:0006189">
    <property type="term" value="P:'de novo' IMP biosynthetic process"/>
    <property type="evidence" value="ECO:0007669"/>
    <property type="project" value="UniProtKB-UniRule"/>
</dbReference>
<dbReference type="CDD" id="cd02203">
    <property type="entry name" value="PurL_repeat1"/>
    <property type="match status" value="1"/>
</dbReference>
<dbReference type="CDD" id="cd02204">
    <property type="entry name" value="PurL_repeat2"/>
    <property type="match status" value="1"/>
</dbReference>
<dbReference type="FunFam" id="3.30.1330.10:FF:000004">
    <property type="entry name" value="Phosphoribosylformylglycinamidine synthase subunit PurL"/>
    <property type="match status" value="1"/>
</dbReference>
<dbReference type="Gene3D" id="3.90.650.10">
    <property type="entry name" value="PurM-like C-terminal domain"/>
    <property type="match status" value="2"/>
</dbReference>
<dbReference type="Gene3D" id="3.30.1330.10">
    <property type="entry name" value="PurM-like, N-terminal domain"/>
    <property type="match status" value="2"/>
</dbReference>
<dbReference type="HAMAP" id="MF_00420">
    <property type="entry name" value="PurL_2"/>
    <property type="match status" value="1"/>
</dbReference>
<dbReference type="InterPro" id="IPR010074">
    <property type="entry name" value="PRibForGlyAmidine_synth_PurL"/>
</dbReference>
<dbReference type="InterPro" id="IPR041609">
    <property type="entry name" value="PurL_linker"/>
</dbReference>
<dbReference type="InterPro" id="IPR010918">
    <property type="entry name" value="PurM-like_C_dom"/>
</dbReference>
<dbReference type="InterPro" id="IPR036676">
    <property type="entry name" value="PurM-like_C_sf"/>
</dbReference>
<dbReference type="InterPro" id="IPR016188">
    <property type="entry name" value="PurM-like_N"/>
</dbReference>
<dbReference type="InterPro" id="IPR036921">
    <property type="entry name" value="PurM-like_N_sf"/>
</dbReference>
<dbReference type="NCBIfam" id="TIGR01736">
    <property type="entry name" value="FGAM_synth_II"/>
    <property type="match status" value="1"/>
</dbReference>
<dbReference type="NCBIfam" id="NF002290">
    <property type="entry name" value="PRK01213.1"/>
    <property type="match status" value="1"/>
</dbReference>
<dbReference type="PANTHER" id="PTHR43555">
    <property type="entry name" value="PHOSPHORIBOSYLFORMYLGLYCINAMIDINE SYNTHASE SUBUNIT PURL"/>
    <property type="match status" value="1"/>
</dbReference>
<dbReference type="PANTHER" id="PTHR43555:SF1">
    <property type="entry name" value="PHOSPHORIBOSYLFORMYLGLYCINAMIDINE SYNTHASE SUBUNIT PURL"/>
    <property type="match status" value="1"/>
</dbReference>
<dbReference type="Pfam" id="PF00586">
    <property type="entry name" value="AIRS"/>
    <property type="match status" value="2"/>
</dbReference>
<dbReference type="Pfam" id="PF02769">
    <property type="entry name" value="AIRS_C"/>
    <property type="match status" value="2"/>
</dbReference>
<dbReference type="Pfam" id="PF18072">
    <property type="entry name" value="FGAR-AT_linker"/>
    <property type="match status" value="1"/>
</dbReference>
<dbReference type="PIRSF" id="PIRSF001587">
    <property type="entry name" value="FGAM_synthase_II"/>
    <property type="match status" value="1"/>
</dbReference>
<dbReference type="SUPFAM" id="SSF56042">
    <property type="entry name" value="PurM C-terminal domain-like"/>
    <property type="match status" value="2"/>
</dbReference>
<dbReference type="SUPFAM" id="SSF55326">
    <property type="entry name" value="PurM N-terminal domain-like"/>
    <property type="match status" value="2"/>
</dbReference>